<reference key="1">
    <citation type="journal article" date="2007" name="Proc. Natl. Acad. Sci. U.S.A.">
        <title>Genome plasticity of BCG and impact on vaccine efficacy.</title>
        <authorList>
            <person name="Brosch R."/>
            <person name="Gordon S.V."/>
            <person name="Garnier T."/>
            <person name="Eiglmeier K."/>
            <person name="Frigui W."/>
            <person name="Valenti P."/>
            <person name="Dos Santos S."/>
            <person name="Duthoy S."/>
            <person name="Lacroix C."/>
            <person name="Garcia-Pelayo C."/>
            <person name="Inwald J.K."/>
            <person name="Golby P."/>
            <person name="Garcia J.N."/>
            <person name="Hewinson R.G."/>
            <person name="Behr M.A."/>
            <person name="Quail M.A."/>
            <person name="Churcher C."/>
            <person name="Barrell B.G."/>
            <person name="Parkhill J."/>
            <person name="Cole S.T."/>
        </authorList>
    </citation>
    <scope>NUCLEOTIDE SEQUENCE [LARGE SCALE GENOMIC DNA]</scope>
    <source>
        <strain>BCG / Pasteur 1173P2</strain>
    </source>
</reference>
<evidence type="ECO:0000255" key="1">
    <source>
        <dbReference type="HAMAP-Rule" id="MF_01615"/>
    </source>
</evidence>
<name>PDXT_MYCBP</name>
<accession>A1KLV4</accession>
<protein>
    <recommendedName>
        <fullName evidence="1">Pyridoxal 5'-phosphate synthase subunit PdxT</fullName>
        <ecNumber evidence="1">4.3.3.6</ecNumber>
    </recommendedName>
    <alternativeName>
        <fullName evidence="1">Pdx2</fullName>
    </alternativeName>
    <alternativeName>
        <fullName evidence="1">Pyridoxal 5'-phosphate synthase glutaminase subunit</fullName>
        <ecNumber evidence="1">3.5.1.2</ecNumber>
    </alternativeName>
</protein>
<keyword id="KW-0315">Glutamine amidotransferase</keyword>
<keyword id="KW-0378">Hydrolase</keyword>
<keyword id="KW-0456">Lyase</keyword>
<keyword id="KW-0663">Pyridoxal phosphate</keyword>
<feature type="chain" id="PRO_0000293004" description="Pyridoxal 5'-phosphate synthase subunit PdxT">
    <location>
        <begin position="1"/>
        <end position="198"/>
    </location>
</feature>
<feature type="active site" description="Nucleophile" evidence="1">
    <location>
        <position position="81"/>
    </location>
</feature>
<feature type="active site" description="Charge relay system" evidence="1">
    <location>
        <position position="177"/>
    </location>
</feature>
<feature type="active site" description="Charge relay system" evidence="1">
    <location>
        <position position="179"/>
    </location>
</feature>
<feature type="binding site" evidence="1">
    <location>
        <begin position="49"/>
        <end position="51"/>
    </location>
    <ligand>
        <name>L-glutamine</name>
        <dbReference type="ChEBI" id="CHEBI:58359"/>
    </ligand>
</feature>
<feature type="binding site" evidence="1">
    <location>
        <position position="113"/>
    </location>
    <ligand>
        <name>L-glutamine</name>
        <dbReference type="ChEBI" id="CHEBI:58359"/>
    </ligand>
</feature>
<feature type="binding site" evidence="1">
    <location>
        <begin position="141"/>
        <end position="142"/>
    </location>
    <ligand>
        <name>L-glutamine</name>
        <dbReference type="ChEBI" id="CHEBI:58359"/>
    </ligand>
</feature>
<sequence>MSVPRVGVLALQGDTREHLAALRECGAEPMTVRRRDELDAVDALVIPGGESTTMSHLLLDLDLLGPLRARLADGLPAYGSCAGMILLASEILDAGAAGRQALPLRAMNMTVRRNAFGSQVDSFEGDIEFAGLDDPVRAVFIRAPWVERVGDGVQVLARAAGHIVAVRQGAVLATAFHPEMTGDRRIHQLFVDIVTSAA</sequence>
<gene>
    <name evidence="1" type="primary">pdxT</name>
    <name type="ordered locus">BCG_2629c</name>
</gene>
<dbReference type="EC" id="4.3.3.6" evidence="1"/>
<dbReference type="EC" id="3.5.1.2" evidence="1"/>
<dbReference type="EMBL" id="AM408590">
    <property type="protein sequence ID" value="CAL72617.1"/>
    <property type="molecule type" value="Genomic_DNA"/>
</dbReference>
<dbReference type="RefSeq" id="WP_003413465.1">
    <property type="nucleotide sequence ID" value="NC_008769.1"/>
</dbReference>
<dbReference type="SMR" id="A1KLV4"/>
<dbReference type="MEROPS" id="C26.A32"/>
<dbReference type="KEGG" id="mbb:BCG_2629c"/>
<dbReference type="HOGENOM" id="CLU_069674_2_0_11"/>
<dbReference type="UniPathway" id="UPA00245"/>
<dbReference type="Proteomes" id="UP000001472">
    <property type="component" value="Chromosome"/>
</dbReference>
<dbReference type="GO" id="GO:0005829">
    <property type="term" value="C:cytosol"/>
    <property type="evidence" value="ECO:0007669"/>
    <property type="project" value="TreeGrafter"/>
</dbReference>
<dbReference type="GO" id="GO:1903600">
    <property type="term" value="C:glutaminase complex"/>
    <property type="evidence" value="ECO:0007669"/>
    <property type="project" value="TreeGrafter"/>
</dbReference>
<dbReference type="GO" id="GO:0004359">
    <property type="term" value="F:glutaminase activity"/>
    <property type="evidence" value="ECO:0007669"/>
    <property type="project" value="UniProtKB-UniRule"/>
</dbReference>
<dbReference type="GO" id="GO:0036381">
    <property type="term" value="F:pyridoxal 5'-phosphate synthase (glutamine hydrolysing) activity"/>
    <property type="evidence" value="ECO:0007669"/>
    <property type="project" value="UniProtKB-UniRule"/>
</dbReference>
<dbReference type="GO" id="GO:0006543">
    <property type="term" value="P:glutamine catabolic process"/>
    <property type="evidence" value="ECO:0007669"/>
    <property type="project" value="UniProtKB-UniRule"/>
</dbReference>
<dbReference type="GO" id="GO:0042823">
    <property type="term" value="P:pyridoxal phosphate biosynthetic process"/>
    <property type="evidence" value="ECO:0007669"/>
    <property type="project" value="UniProtKB-UniRule"/>
</dbReference>
<dbReference type="GO" id="GO:0008614">
    <property type="term" value="P:pyridoxine metabolic process"/>
    <property type="evidence" value="ECO:0007669"/>
    <property type="project" value="TreeGrafter"/>
</dbReference>
<dbReference type="CDD" id="cd01749">
    <property type="entry name" value="GATase1_PB"/>
    <property type="match status" value="1"/>
</dbReference>
<dbReference type="FunFam" id="3.40.50.880:FF:000010">
    <property type="entry name" value="uncharacterized protein LOC100176842 isoform X2"/>
    <property type="match status" value="1"/>
</dbReference>
<dbReference type="Gene3D" id="3.40.50.880">
    <property type="match status" value="1"/>
</dbReference>
<dbReference type="HAMAP" id="MF_01615">
    <property type="entry name" value="PdxT"/>
    <property type="match status" value="1"/>
</dbReference>
<dbReference type="InterPro" id="IPR029062">
    <property type="entry name" value="Class_I_gatase-like"/>
</dbReference>
<dbReference type="InterPro" id="IPR002161">
    <property type="entry name" value="PdxT/SNO"/>
</dbReference>
<dbReference type="InterPro" id="IPR021196">
    <property type="entry name" value="PdxT/SNO_CS"/>
</dbReference>
<dbReference type="NCBIfam" id="TIGR03800">
    <property type="entry name" value="PLP_synth_Pdx2"/>
    <property type="match status" value="1"/>
</dbReference>
<dbReference type="PANTHER" id="PTHR31559">
    <property type="entry name" value="PYRIDOXAL 5'-PHOSPHATE SYNTHASE SUBUNIT SNO"/>
    <property type="match status" value="1"/>
</dbReference>
<dbReference type="PANTHER" id="PTHR31559:SF0">
    <property type="entry name" value="PYRIDOXAL 5'-PHOSPHATE SYNTHASE SUBUNIT SNO1-RELATED"/>
    <property type="match status" value="1"/>
</dbReference>
<dbReference type="Pfam" id="PF01174">
    <property type="entry name" value="SNO"/>
    <property type="match status" value="1"/>
</dbReference>
<dbReference type="PIRSF" id="PIRSF005639">
    <property type="entry name" value="Glut_amidoT_SNO"/>
    <property type="match status" value="1"/>
</dbReference>
<dbReference type="SUPFAM" id="SSF52317">
    <property type="entry name" value="Class I glutamine amidotransferase-like"/>
    <property type="match status" value="1"/>
</dbReference>
<dbReference type="PROSITE" id="PS01236">
    <property type="entry name" value="PDXT_SNO_1"/>
    <property type="match status" value="1"/>
</dbReference>
<dbReference type="PROSITE" id="PS51130">
    <property type="entry name" value="PDXT_SNO_2"/>
    <property type="match status" value="1"/>
</dbReference>
<comment type="function">
    <text evidence="1">Catalyzes the hydrolysis of glutamine to glutamate and ammonia as part of the biosynthesis of pyridoxal 5'-phosphate. The resulting ammonia molecule is channeled to the active site of PdxS.</text>
</comment>
<comment type="catalytic activity">
    <reaction evidence="1">
        <text>aldehydo-D-ribose 5-phosphate + D-glyceraldehyde 3-phosphate + L-glutamine = pyridoxal 5'-phosphate + L-glutamate + phosphate + 3 H2O + H(+)</text>
        <dbReference type="Rhea" id="RHEA:31507"/>
        <dbReference type="ChEBI" id="CHEBI:15377"/>
        <dbReference type="ChEBI" id="CHEBI:15378"/>
        <dbReference type="ChEBI" id="CHEBI:29985"/>
        <dbReference type="ChEBI" id="CHEBI:43474"/>
        <dbReference type="ChEBI" id="CHEBI:58273"/>
        <dbReference type="ChEBI" id="CHEBI:58359"/>
        <dbReference type="ChEBI" id="CHEBI:59776"/>
        <dbReference type="ChEBI" id="CHEBI:597326"/>
        <dbReference type="EC" id="4.3.3.6"/>
    </reaction>
</comment>
<comment type="catalytic activity">
    <reaction evidence="1">
        <text>L-glutamine + H2O = L-glutamate + NH4(+)</text>
        <dbReference type="Rhea" id="RHEA:15889"/>
        <dbReference type="ChEBI" id="CHEBI:15377"/>
        <dbReference type="ChEBI" id="CHEBI:28938"/>
        <dbReference type="ChEBI" id="CHEBI:29985"/>
        <dbReference type="ChEBI" id="CHEBI:58359"/>
        <dbReference type="EC" id="3.5.1.2"/>
    </reaction>
</comment>
<comment type="pathway">
    <text evidence="1">Cofactor biosynthesis; pyridoxal 5'-phosphate biosynthesis.</text>
</comment>
<comment type="subunit">
    <text evidence="1">In the presence of PdxS, forms a dodecamer of heterodimers. Only shows activity in the heterodimer.</text>
</comment>
<comment type="similarity">
    <text evidence="1">Belongs to the glutaminase PdxT/SNO family.</text>
</comment>
<proteinExistence type="inferred from homology"/>
<organism>
    <name type="scientific">Mycobacterium bovis (strain BCG / Pasteur 1173P2)</name>
    <dbReference type="NCBI Taxonomy" id="410289"/>
    <lineage>
        <taxon>Bacteria</taxon>
        <taxon>Bacillati</taxon>
        <taxon>Actinomycetota</taxon>
        <taxon>Actinomycetes</taxon>
        <taxon>Mycobacteriales</taxon>
        <taxon>Mycobacteriaceae</taxon>
        <taxon>Mycobacterium</taxon>
        <taxon>Mycobacterium tuberculosis complex</taxon>
    </lineage>
</organism>